<comment type="function">
    <text evidence="1">Catalyzes the attachment of proline to tRNA(Pro) in a two-step reaction: proline is first activated by ATP to form Pro-AMP and then transferred to the acceptor end of tRNA(Pro). As ProRS can inadvertently accommodate and process non-cognate amino acids such as alanine and cysteine, to avoid such errors it has two additional distinct editing activities against alanine. One activity is designated as 'pretransfer' editing and involves the tRNA(Pro)-independent hydrolysis of activated Ala-AMP. The other activity is designated 'posttransfer' editing and involves deacylation of mischarged Ala-tRNA(Pro). The misacylated Cys-tRNA(Pro) is not edited by ProRS.</text>
</comment>
<comment type="catalytic activity">
    <reaction evidence="1">
        <text>tRNA(Pro) + L-proline + ATP = L-prolyl-tRNA(Pro) + AMP + diphosphate</text>
        <dbReference type="Rhea" id="RHEA:14305"/>
        <dbReference type="Rhea" id="RHEA-COMP:9700"/>
        <dbReference type="Rhea" id="RHEA-COMP:9702"/>
        <dbReference type="ChEBI" id="CHEBI:30616"/>
        <dbReference type="ChEBI" id="CHEBI:33019"/>
        <dbReference type="ChEBI" id="CHEBI:60039"/>
        <dbReference type="ChEBI" id="CHEBI:78442"/>
        <dbReference type="ChEBI" id="CHEBI:78532"/>
        <dbReference type="ChEBI" id="CHEBI:456215"/>
        <dbReference type="EC" id="6.1.1.15"/>
    </reaction>
</comment>
<comment type="subunit">
    <text evidence="1">Homodimer.</text>
</comment>
<comment type="subcellular location">
    <subcellularLocation>
        <location evidence="1">Cytoplasm</location>
    </subcellularLocation>
</comment>
<comment type="domain">
    <text evidence="1">Consists of three domains: the N-terminal catalytic domain, the editing domain and the C-terminal anticodon-binding domain.</text>
</comment>
<comment type="similarity">
    <text evidence="1">Belongs to the class-II aminoacyl-tRNA synthetase family. ProS type 1 subfamily.</text>
</comment>
<protein>
    <recommendedName>
        <fullName evidence="1">Proline--tRNA ligase</fullName>
        <ecNumber evidence="1">6.1.1.15</ecNumber>
    </recommendedName>
    <alternativeName>
        <fullName evidence="1">Prolyl-tRNA synthetase</fullName>
        <shortName evidence="1">ProRS</shortName>
    </alternativeName>
</protein>
<organism>
    <name type="scientific">Prochlorococcus marinus (strain AS9601)</name>
    <dbReference type="NCBI Taxonomy" id="146891"/>
    <lineage>
        <taxon>Bacteria</taxon>
        <taxon>Bacillati</taxon>
        <taxon>Cyanobacteriota</taxon>
        <taxon>Cyanophyceae</taxon>
        <taxon>Synechococcales</taxon>
        <taxon>Prochlorococcaceae</taxon>
        <taxon>Prochlorococcus</taxon>
    </lineage>
</organism>
<reference key="1">
    <citation type="journal article" date="2007" name="PLoS Genet.">
        <title>Patterns and implications of gene gain and loss in the evolution of Prochlorococcus.</title>
        <authorList>
            <person name="Kettler G.C."/>
            <person name="Martiny A.C."/>
            <person name="Huang K."/>
            <person name="Zucker J."/>
            <person name="Coleman M.L."/>
            <person name="Rodrigue S."/>
            <person name="Chen F."/>
            <person name="Lapidus A."/>
            <person name="Ferriera S."/>
            <person name="Johnson J."/>
            <person name="Steglich C."/>
            <person name="Church G.M."/>
            <person name="Richardson P."/>
            <person name="Chisholm S.W."/>
        </authorList>
    </citation>
    <scope>NUCLEOTIDE SEQUENCE [LARGE SCALE GENOMIC DNA]</scope>
    <source>
        <strain>AS9601</strain>
    </source>
</reference>
<feature type="chain" id="PRO_0000288362" description="Proline--tRNA ligase">
    <location>
        <begin position="1"/>
        <end position="600"/>
    </location>
</feature>
<dbReference type="EC" id="6.1.1.15" evidence="1"/>
<dbReference type="EMBL" id="CP000551">
    <property type="protein sequence ID" value="ABM69851.1"/>
    <property type="molecule type" value="Genomic_DNA"/>
</dbReference>
<dbReference type="RefSeq" id="WP_011818017.1">
    <property type="nucleotide sequence ID" value="NC_008816.1"/>
</dbReference>
<dbReference type="SMR" id="A2BPZ0"/>
<dbReference type="STRING" id="146891.A9601_05651"/>
<dbReference type="KEGG" id="pmb:A9601_05651"/>
<dbReference type="eggNOG" id="COG0442">
    <property type="taxonomic scope" value="Bacteria"/>
</dbReference>
<dbReference type="HOGENOM" id="CLU_016739_0_0_3"/>
<dbReference type="OrthoDB" id="9809052at2"/>
<dbReference type="Proteomes" id="UP000002590">
    <property type="component" value="Chromosome"/>
</dbReference>
<dbReference type="GO" id="GO:0005829">
    <property type="term" value="C:cytosol"/>
    <property type="evidence" value="ECO:0007669"/>
    <property type="project" value="TreeGrafter"/>
</dbReference>
<dbReference type="GO" id="GO:0002161">
    <property type="term" value="F:aminoacyl-tRNA deacylase activity"/>
    <property type="evidence" value="ECO:0007669"/>
    <property type="project" value="InterPro"/>
</dbReference>
<dbReference type="GO" id="GO:0005524">
    <property type="term" value="F:ATP binding"/>
    <property type="evidence" value="ECO:0007669"/>
    <property type="project" value="UniProtKB-UniRule"/>
</dbReference>
<dbReference type="GO" id="GO:0004827">
    <property type="term" value="F:proline-tRNA ligase activity"/>
    <property type="evidence" value="ECO:0007669"/>
    <property type="project" value="UniProtKB-UniRule"/>
</dbReference>
<dbReference type="GO" id="GO:0006433">
    <property type="term" value="P:prolyl-tRNA aminoacylation"/>
    <property type="evidence" value="ECO:0007669"/>
    <property type="project" value="UniProtKB-UniRule"/>
</dbReference>
<dbReference type="CDD" id="cd04334">
    <property type="entry name" value="ProRS-INS"/>
    <property type="match status" value="1"/>
</dbReference>
<dbReference type="CDD" id="cd00861">
    <property type="entry name" value="ProRS_anticodon_short"/>
    <property type="match status" value="1"/>
</dbReference>
<dbReference type="Gene3D" id="3.40.50.800">
    <property type="entry name" value="Anticodon-binding domain"/>
    <property type="match status" value="1"/>
</dbReference>
<dbReference type="Gene3D" id="3.30.930.10">
    <property type="entry name" value="Bira Bifunctional Protein, Domain 2"/>
    <property type="match status" value="2"/>
</dbReference>
<dbReference type="HAMAP" id="MF_01569">
    <property type="entry name" value="Pro_tRNA_synth_type1"/>
    <property type="match status" value="1"/>
</dbReference>
<dbReference type="InterPro" id="IPR002314">
    <property type="entry name" value="aa-tRNA-synt_IIb"/>
</dbReference>
<dbReference type="InterPro" id="IPR006195">
    <property type="entry name" value="aa-tRNA-synth_II"/>
</dbReference>
<dbReference type="InterPro" id="IPR045864">
    <property type="entry name" value="aa-tRNA-synth_II/BPL/LPL"/>
</dbReference>
<dbReference type="InterPro" id="IPR004154">
    <property type="entry name" value="Anticodon-bd"/>
</dbReference>
<dbReference type="InterPro" id="IPR036621">
    <property type="entry name" value="Anticodon-bd_dom_sf"/>
</dbReference>
<dbReference type="InterPro" id="IPR002316">
    <property type="entry name" value="Pro-tRNA-ligase_IIa"/>
</dbReference>
<dbReference type="InterPro" id="IPR004500">
    <property type="entry name" value="Pro-tRNA-synth_IIa_bac-type"/>
</dbReference>
<dbReference type="InterPro" id="IPR023717">
    <property type="entry name" value="Pro-tRNA-Synthase_IIa_type1"/>
</dbReference>
<dbReference type="InterPro" id="IPR050062">
    <property type="entry name" value="Pro-tRNA_synthetase"/>
</dbReference>
<dbReference type="InterPro" id="IPR044140">
    <property type="entry name" value="ProRS_anticodon_short"/>
</dbReference>
<dbReference type="InterPro" id="IPR036754">
    <property type="entry name" value="YbaK/aa-tRNA-synt-asso_dom_sf"/>
</dbReference>
<dbReference type="InterPro" id="IPR007214">
    <property type="entry name" value="YbaK/aa-tRNA-synth-assoc-dom"/>
</dbReference>
<dbReference type="NCBIfam" id="NF006625">
    <property type="entry name" value="PRK09194.1"/>
    <property type="match status" value="1"/>
</dbReference>
<dbReference type="NCBIfam" id="TIGR00409">
    <property type="entry name" value="proS_fam_II"/>
    <property type="match status" value="1"/>
</dbReference>
<dbReference type="PANTHER" id="PTHR42753">
    <property type="entry name" value="MITOCHONDRIAL RIBOSOME PROTEIN L39/PROLYL-TRNA LIGASE FAMILY MEMBER"/>
    <property type="match status" value="1"/>
</dbReference>
<dbReference type="PANTHER" id="PTHR42753:SF2">
    <property type="entry name" value="PROLINE--TRNA LIGASE"/>
    <property type="match status" value="1"/>
</dbReference>
<dbReference type="Pfam" id="PF03129">
    <property type="entry name" value="HGTP_anticodon"/>
    <property type="match status" value="1"/>
</dbReference>
<dbReference type="Pfam" id="PF00587">
    <property type="entry name" value="tRNA-synt_2b"/>
    <property type="match status" value="1"/>
</dbReference>
<dbReference type="Pfam" id="PF04073">
    <property type="entry name" value="tRNA_edit"/>
    <property type="match status" value="1"/>
</dbReference>
<dbReference type="PRINTS" id="PR01046">
    <property type="entry name" value="TRNASYNTHPRO"/>
</dbReference>
<dbReference type="SUPFAM" id="SSF52954">
    <property type="entry name" value="Class II aaRS ABD-related"/>
    <property type="match status" value="1"/>
</dbReference>
<dbReference type="SUPFAM" id="SSF55681">
    <property type="entry name" value="Class II aaRS and biotin synthetases"/>
    <property type="match status" value="1"/>
</dbReference>
<dbReference type="SUPFAM" id="SSF55826">
    <property type="entry name" value="YbaK/ProRS associated domain"/>
    <property type="match status" value="1"/>
</dbReference>
<dbReference type="PROSITE" id="PS50862">
    <property type="entry name" value="AA_TRNA_LIGASE_II"/>
    <property type="match status" value="1"/>
</dbReference>
<accession>A2BPZ0</accession>
<sequence length="600" mass="68049">MRVTTSFPLGTLRDTPSEAEIISHQLLLKAGYIRRVNSGIYAYMPLMLRVIEKISAIIEKELNSIGCTKLLLPQLHPADLWKKSERWEGYTAGEGIMFNLKDRQGKEFGLAPTHEEVITSIASETINSYKQLPQCFYQIQTKFRDEIRPRFGLMRSREFIMKDGYSFHSSQNDLASFYEKVSNAYENIFKSCGLQTVGVEADSGAIGGASSKEFMVTADAGEDSILFTQSGSYAANIEKAVSLPSQPIPLKDNIPEWLETPHQKTILEVCDNNNLDPSQIIKVVIFLAQFEGEFNVPILACIRGDQHINEVKLFNLINKLNHFNLLNLKKIEDKKTIEKNLVDLPLGFIGPDLDNNTIKAISNWEKQWTRIIDHSASDLSKFISGGNKVNFHKVFQEFSFDSKDYLIGDIRNAKKGDKISVYDDEELKEKKGIEIGHIFQLGQKYSEKLNAKFSDKDGQLKNLWMGCYGIGVTRIAQAAIEQNHDQKGICWPIHISPFEVIIIPTNLKDPIQSDLTEQIYSNFLINKIDVLLDDRNDRAGVKFKDAELIGIPFQIIIGRDSINKEVELLCRTNNTKLKISTDKLLETFISESEIMYNKKS</sequence>
<name>SYP_PROMS</name>
<evidence type="ECO:0000255" key="1">
    <source>
        <dbReference type="HAMAP-Rule" id="MF_01569"/>
    </source>
</evidence>
<gene>
    <name evidence="1" type="primary">proS</name>
    <name type="ordered locus">A9601_05651</name>
</gene>
<keyword id="KW-0030">Aminoacyl-tRNA synthetase</keyword>
<keyword id="KW-0067">ATP-binding</keyword>
<keyword id="KW-0963">Cytoplasm</keyword>
<keyword id="KW-0436">Ligase</keyword>
<keyword id="KW-0547">Nucleotide-binding</keyword>
<keyword id="KW-0648">Protein biosynthesis</keyword>
<proteinExistence type="inferred from homology"/>